<reference key="1">
    <citation type="journal article" date="2004" name="Nature">
        <title>Genome evolution in yeasts.</title>
        <authorList>
            <person name="Dujon B."/>
            <person name="Sherman D."/>
            <person name="Fischer G."/>
            <person name="Durrens P."/>
            <person name="Casaregola S."/>
            <person name="Lafontaine I."/>
            <person name="de Montigny J."/>
            <person name="Marck C."/>
            <person name="Neuveglise C."/>
            <person name="Talla E."/>
            <person name="Goffard N."/>
            <person name="Frangeul L."/>
            <person name="Aigle M."/>
            <person name="Anthouard V."/>
            <person name="Babour A."/>
            <person name="Barbe V."/>
            <person name="Barnay S."/>
            <person name="Blanchin S."/>
            <person name="Beckerich J.-M."/>
            <person name="Beyne E."/>
            <person name="Bleykasten C."/>
            <person name="Boisrame A."/>
            <person name="Boyer J."/>
            <person name="Cattolico L."/>
            <person name="Confanioleri F."/>
            <person name="de Daruvar A."/>
            <person name="Despons L."/>
            <person name="Fabre E."/>
            <person name="Fairhead C."/>
            <person name="Ferry-Dumazet H."/>
            <person name="Groppi A."/>
            <person name="Hantraye F."/>
            <person name="Hennequin C."/>
            <person name="Jauniaux N."/>
            <person name="Joyet P."/>
            <person name="Kachouri R."/>
            <person name="Kerrest A."/>
            <person name="Koszul R."/>
            <person name="Lemaire M."/>
            <person name="Lesur I."/>
            <person name="Ma L."/>
            <person name="Muller H."/>
            <person name="Nicaud J.-M."/>
            <person name="Nikolski M."/>
            <person name="Oztas S."/>
            <person name="Ozier-Kalogeropoulos O."/>
            <person name="Pellenz S."/>
            <person name="Potier S."/>
            <person name="Richard G.-F."/>
            <person name="Straub M.-L."/>
            <person name="Suleau A."/>
            <person name="Swennen D."/>
            <person name="Tekaia F."/>
            <person name="Wesolowski-Louvel M."/>
            <person name="Westhof E."/>
            <person name="Wirth B."/>
            <person name="Zeniou-Meyer M."/>
            <person name="Zivanovic Y."/>
            <person name="Bolotin-Fukuhara M."/>
            <person name="Thierry A."/>
            <person name="Bouchier C."/>
            <person name="Caudron B."/>
            <person name="Scarpelli C."/>
            <person name="Gaillardin C."/>
            <person name="Weissenbach J."/>
            <person name="Wincker P."/>
            <person name="Souciet J.-L."/>
        </authorList>
    </citation>
    <scope>NUCLEOTIDE SEQUENCE [LARGE SCALE GENOMIC DNA]</scope>
    <source>
        <strain>ATCC 2001 / BCRC 20586 / JCM 3761 / NBRC 0622 / NRRL Y-65 / CBS 138</strain>
    </source>
</reference>
<dbReference type="EMBL" id="CR380955">
    <property type="protein sequence ID" value="CAG60349.1"/>
    <property type="molecule type" value="Genomic_DNA"/>
</dbReference>
<dbReference type="RefSeq" id="XP_447412.1">
    <property type="nucleotide sequence ID" value="XM_447412.1"/>
</dbReference>
<dbReference type="SMR" id="Q6FQT2"/>
<dbReference type="FunCoup" id="Q6FQT2">
    <property type="interactions" value="1542"/>
</dbReference>
<dbReference type="STRING" id="284593.Q6FQT2"/>
<dbReference type="EnsemblFungi" id="CAGL0I03762g-T">
    <property type="protein sequence ID" value="CAGL0I03762g-T-p1"/>
    <property type="gene ID" value="CAGL0I03762g"/>
</dbReference>
<dbReference type="KEGG" id="cgr:2889151"/>
<dbReference type="CGD" id="CAL0130482">
    <property type="gene designation" value="CAGL0I03762g"/>
</dbReference>
<dbReference type="VEuPathDB" id="FungiDB:B1J91_I03762g"/>
<dbReference type="VEuPathDB" id="FungiDB:CAGL0I03762g"/>
<dbReference type="eggNOG" id="KOG0358">
    <property type="taxonomic scope" value="Eukaryota"/>
</dbReference>
<dbReference type="HOGENOM" id="CLU_008891_9_1_1"/>
<dbReference type="InParanoid" id="Q6FQT2"/>
<dbReference type="OMA" id="HPAANMI"/>
<dbReference type="Proteomes" id="UP000002428">
    <property type="component" value="Chromosome I"/>
</dbReference>
<dbReference type="GO" id="GO:0005832">
    <property type="term" value="C:chaperonin-containing T-complex"/>
    <property type="evidence" value="ECO:0007669"/>
    <property type="project" value="EnsemblFungi"/>
</dbReference>
<dbReference type="GO" id="GO:0005524">
    <property type="term" value="F:ATP binding"/>
    <property type="evidence" value="ECO:0007669"/>
    <property type="project" value="UniProtKB-KW"/>
</dbReference>
<dbReference type="GO" id="GO:0016887">
    <property type="term" value="F:ATP hydrolysis activity"/>
    <property type="evidence" value="ECO:0007669"/>
    <property type="project" value="InterPro"/>
</dbReference>
<dbReference type="GO" id="GO:0140662">
    <property type="term" value="F:ATP-dependent protein folding chaperone"/>
    <property type="evidence" value="ECO:0007669"/>
    <property type="project" value="InterPro"/>
</dbReference>
<dbReference type="GO" id="GO:0051082">
    <property type="term" value="F:unfolded protein binding"/>
    <property type="evidence" value="ECO:0007669"/>
    <property type="project" value="EnsemblFungi"/>
</dbReference>
<dbReference type="GO" id="GO:0051086">
    <property type="term" value="P:chaperone mediated protein folding independent of cofactor"/>
    <property type="evidence" value="ECO:0007669"/>
    <property type="project" value="EnsemblFungi"/>
</dbReference>
<dbReference type="CDD" id="cd03338">
    <property type="entry name" value="TCP1_delta"/>
    <property type="match status" value="1"/>
</dbReference>
<dbReference type="FunFam" id="3.50.7.10:FF:000010">
    <property type="entry name" value="T-complex protein 1 subunit delta"/>
    <property type="match status" value="1"/>
</dbReference>
<dbReference type="Gene3D" id="3.50.7.10">
    <property type="entry name" value="GroEL"/>
    <property type="match status" value="1"/>
</dbReference>
<dbReference type="Gene3D" id="1.10.560.10">
    <property type="entry name" value="GroEL-like equatorial domain"/>
    <property type="match status" value="1"/>
</dbReference>
<dbReference type="Gene3D" id="3.30.260.10">
    <property type="entry name" value="TCP-1-like chaperonin intermediate domain"/>
    <property type="match status" value="1"/>
</dbReference>
<dbReference type="InterPro" id="IPR012717">
    <property type="entry name" value="Chap_CCT_delta"/>
</dbReference>
<dbReference type="InterPro" id="IPR017998">
    <property type="entry name" value="Chaperone_TCP-1"/>
</dbReference>
<dbReference type="InterPro" id="IPR002194">
    <property type="entry name" value="Chaperonin_TCP-1_CS"/>
</dbReference>
<dbReference type="InterPro" id="IPR002423">
    <property type="entry name" value="Cpn60/GroEL/TCP-1"/>
</dbReference>
<dbReference type="InterPro" id="IPR027409">
    <property type="entry name" value="GroEL-like_apical_dom_sf"/>
</dbReference>
<dbReference type="InterPro" id="IPR027413">
    <property type="entry name" value="GROEL-like_equatorial_sf"/>
</dbReference>
<dbReference type="InterPro" id="IPR027410">
    <property type="entry name" value="TCP-1-like_intermed_sf"/>
</dbReference>
<dbReference type="InterPro" id="IPR053374">
    <property type="entry name" value="TCP-1_chaperonin"/>
</dbReference>
<dbReference type="InterPro" id="IPR054827">
    <property type="entry name" value="thermosome_alpha"/>
</dbReference>
<dbReference type="NCBIfam" id="TIGR02342">
    <property type="entry name" value="chap_CCT_delta"/>
    <property type="match status" value="1"/>
</dbReference>
<dbReference type="NCBIfam" id="NF041082">
    <property type="entry name" value="thermosome_alpha"/>
    <property type="match status" value="1"/>
</dbReference>
<dbReference type="NCBIfam" id="NF041083">
    <property type="entry name" value="thermosome_beta"/>
    <property type="match status" value="1"/>
</dbReference>
<dbReference type="PANTHER" id="PTHR11353">
    <property type="entry name" value="CHAPERONIN"/>
    <property type="match status" value="1"/>
</dbReference>
<dbReference type="Pfam" id="PF00118">
    <property type="entry name" value="Cpn60_TCP1"/>
    <property type="match status" value="1"/>
</dbReference>
<dbReference type="PRINTS" id="PR00304">
    <property type="entry name" value="TCOMPLEXTCP1"/>
</dbReference>
<dbReference type="SUPFAM" id="SSF52029">
    <property type="entry name" value="GroEL apical domain-like"/>
    <property type="match status" value="1"/>
</dbReference>
<dbReference type="SUPFAM" id="SSF48592">
    <property type="entry name" value="GroEL equatorial domain-like"/>
    <property type="match status" value="1"/>
</dbReference>
<dbReference type="SUPFAM" id="SSF54849">
    <property type="entry name" value="GroEL-intermediate domain like"/>
    <property type="match status" value="1"/>
</dbReference>
<dbReference type="PROSITE" id="PS00750">
    <property type="entry name" value="TCP1_1"/>
    <property type="match status" value="1"/>
</dbReference>
<dbReference type="PROSITE" id="PS00751">
    <property type="entry name" value="TCP1_2"/>
    <property type="match status" value="1"/>
</dbReference>
<dbReference type="PROSITE" id="PS00995">
    <property type="entry name" value="TCP1_3"/>
    <property type="match status" value="1"/>
</dbReference>
<feature type="chain" id="PRO_0000128340" description="T-complex protein 1 subunit delta">
    <location>
        <begin position="1"/>
        <end position="529"/>
    </location>
</feature>
<gene>
    <name type="primary">CCT4</name>
    <name type="ordered locus">CAGL0I03762g</name>
</gene>
<accession>Q6FQT2</accession>
<organism>
    <name type="scientific">Candida glabrata (strain ATCC 2001 / BCRC 20586 / JCM 3761 / NBRC 0622 / NRRL Y-65 / CBS 138)</name>
    <name type="common">Yeast</name>
    <name type="synonym">Nakaseomyces glabratus</name>
    <dbReference type="NCBI Taxonomy" id="284593"/>
    <lineage>
        <taxon>Eukaryota</taxon>
        <taxon>Fungi</taxon>
        <taxon>Dikarya</taxon>
        <taxon>Ascomycota</taxon>
        <taxon>Saccharomycotina</taxon>
        <taxon>Saccharomycetes</taxon>
        <taxon>Saccharomycetales</taxon>
        <taxon>Saccharomycetaceae</taxon>
        <taxon>Nakaseomyces</taxon>
    </lineage>
</organism>
<protein>
    <recommendedName>
        <fullName>T-complex protein 1 subunit delta</fullName>
        <shortName>TCP-1-delta</shortName>
    </recommendedName>
    <alternativeName>
        <fullName>CCT-delta</fullName>
    </alternativeName>
</protein>
<proteinExistence type="inferred from homology"/>
<keyword id="KW-0067">ATP-binding</keyword>
<keyword id="KW-0143">Chaperone</keyword>
<keyword id="KW-0963">Cytoplasm</keyword>
<keyword id="KW-0547">Nucleotide-binding</keyword>
<keyword id="KW-1185">Reference proteome</keyword>
<name>TCPD_CANGA</name>
<evidence type="ECO:0000250" key="1"/>
<evidence type="ECO:0000305" key="2"/>
<comment type="function">
    <text evidence="1">Molecular chaperone; assists the folding of proteins upon ATP hydrolysis. Known to play a role, in vitro, in the folding of actin and tubulin (By similarity).</text>
</comment>
<comment type="subunit">
    <text evidence="2">Heterooligomeric complex of about 850 to 900 kDa that forms two stacked rings, 12 to 16 nm in diameter.</text>
</comment>
<comment type="subcellular location">
    <subcellularLocation>
        <location evidence="2">Cytoplasm</location>
    </subcellularLocation>
</comment>
<comment type="similarity">
    <text evidence="2">Belongs to the TCP-1 chaperonin family.</text>
</comment>
<sequence>MVAQKSVSNATFKNKEKPQEVRRANIVAARAVADAIRTSLGPKGMDKMIKTSRGEIIISNDGHTILKQMAILHPVAKMLVDVSAAQDSEAGDGTTSVVILTGALLGAADRLLNKGIHPTIIAESFQKAARRSVETLLEICHPVSLDDREDLIRAASTSLSSKIVSQYSSFLSPLAVDAVLSITEKDSKTVDLNDIRLVKKVGGTIGDTEMVDGVVLTQTVVKTAGGPTMKEKAKIGLIQFQISPPKPDTENNIVVSDYRQMDKILKEERAYLLNICKKIKKAKCNVLLIQKSILRDAVNDLALHFLAKLGIMVIKDIEREEIEFLSKSLGCKPISDVELFTEDRLGSADLVEEIDSDGTKIVKFSGVKGVNAKPTVSVIIRGANSMILDETERSLHDALCVIRCLVKERGLIAGGGAPEIEISRRLERESRSMEGVEAYIWQEFAQALEVIPTTLAENAGLNSIKVITELRSRHENGDVNEGISVRRSGTTNTYEEHILQPVLVSTSAITLASECVKSILRIDDITFSR</sequence>